<reference key="1">
    <citation type="journal article" date="2008" name="PLoS Genet.">
        <title>Genomic islands in the pathogenic filamentous fungus Aspergillus fumigatus.</title>
        <authorList>
            <person name="Fedorova N.D."/>
            <person name="Khaldi N."/>
            <person name="Joardar V.S."/>
            <person name="Maiti R."/>
            <person name="Amedeo P."/>
            <person name="Anderson M.J."/>
            <person name="Crabtree J."/>
            <person name="Silva J.C."/>
            <person name="Badger J.H."/>
            <person name="Albarraq A."/>
            <person name="Angiuoli S."/>
            <person name="Bussey H."/>
            <person name="Bowyer P."/>
            <person name="Cotty P.J."/>
            <person name="Dyer P.S."/>
            <person name="Egan A."/>
            <person name="Galens K."/>
            <person name="Fraser-Liggett C.M."/>
            <person name="Haas B.J."/>
            <person name="Inman J.M."/>
            <person name="Kent R."/>
            <person name="Lemieux S."/>
            <person name="Malavazi I."/>
            <person name="Orvis J."/>
            <person name="Roemer T."/>
            <person name="Ronning C.M."/>
            <person name="Sundaram J.P."/>
            <person name="Sutton G."/>
            <person name="Turner G."/>
            <person name="Venter J.C."/>
            <person name="White O.R."/>
            <person name="Whitty B.R."/>
            <person name="Youngman P."/>
            <person name="Wolfe K.H."/>
            <person name="Goldman G.H."/>
            <person name="Wortman J.R."/>
            <person name="Jiang B."/>
            <person name="Denning D.W."/>
            <person name="Nierman W.C."/>
        </authorList>
    </citation>
    <scope>NUCLEOTIDE SEQUENCE [LARGE SCALE GENOMIC DNA]</scope>
    <source>
        <strain>ATCC 1020 / DSM 3700 / CBS 544.65 / FGSC A1164 / JCM 1740 / NRRL 181 / WB 181</strain>
    </source>
</reference>
<name>PURA_NEOFI</name>
<protein>
    <recommendedName>
        <fullName evidence="2">Adenylosuccinate synthetase</fullName>
        <shortName evidence="2">AMPSase</shortName>
        <shortName evidence="2">AdSS</shortName>
        <ecNumber evidence="2">6.3.4.4</ecNumber>
    </recommendedName>
    <alternativeName>
        <fullName evidence="2">IMP--aspartate ligase</fullName>
    </alternativeName>
</protein>
<keyword id="KW-0963">Cytoplasm</keyword>
<keyword id="KW-0342">GTP-binding</keyword>
<keyword id="KW-0436">Ligase</keyword>
<keyword id="KW-0460">Magnesium</keyword>
<keyword id="KW-0479">Metal-binding</keyword>
<keyword id="KW-0547">Nucleotide-binding</keyword>
<keyword id="KW-0658">Purine biosynthesis</keyword>
<keyword id="KW-1185">Reference proteome</keyword>
<dbReference type="EC" id="6.3.4.4" evidence="2"/>
<dbReference type="EMBL" id="DS027688">
    <property type="protein sequence ID" value="EAW22315.1"/>
    <property type="molecule type" value="Genomic_DNA"/>
</dbReference>
<dbReference type="RefSeq" id="XP_001264212.1">
    <property type="nucleotide sequence ID" value="XM_001264211.1"/>
</dbReference>
<dbReference type="SMR" id="A1D1M2"/>
<dbReference type="STRING" id="331117.A1D1M2"/>
<dbReference type="EnsemblFungi" id="EAW22315">
    <property type="protein sequence ID" value="EAW22315"/>
    <property type="gene ID" value="NFIA_009950"/>
</dbReference>
<dbReference type="GeneID" id="4591158"/>
<dbReference type="KEGG" id="nfi:NFIA_009950"/>
<dbReference type="VEuPathDB" id="FungiDB:NFIA_009950"/>
<dbReference type="eggNOG" id="KOG1355">
    <property type="taxonomic scope" value="Eukaryota"/>
</dbReference>
<dbReference type="HOGENOM" id="CLU_029848_3_2_1"/>
<dbReference type="OMA" id="FHHAKPI"/>
<dbReference type="OrthoDB" id="10265645at2759"/>
<dbReference type="UniPathway" id="UPA00075">
    <property type="reaction ID" value="UER00335"/>
</dbReference>
<dbReference type="Proteomes" id="UP000006702">
    <property type="component" value="Unassembled WGS sequence"/>
</dbReference>
<dbReference type="GO" id="GO:0005737">
    <property type="term" value="C:cytoplasm"/>
    <property type="evidence" value="ECO:0007669"/>
    <property type="project" value="UniProtKB-SubCell"/>
</dbReference>
<dbReference type="GO" id="GO:0004019">
    <property type="term" value="F:adenylosuccinate synthase activity"/>
    <property type="evidence" value="ECO:0007669"/>
    <property type="project" value="UniProtKB-UniRule"/>
</dbReference>
<dbReference type="GO" id="GO:0016208">
    <property type="term" value="F:AMP binding"/>
    <property type="evidence" value="ECO:0007669"/>
    <property type="project" value="EnsemblFungi"/>
</dbReference>
<dbReference type="GO" id="GO:0019002">
    <property type="term" value="F:GMP binding"/>
    <property type="evidence" value="ECO:0007669"/>
    <property type="project" value="EnsemblFungi"/>
</dbReference>
<dbReference type="GO" id="GO:0005525">
    <property type="term" value="F:GTP binding"/>
    <property type="evidence" value="ECO:0007669"/>
    <property type="project" value="UniProtKB-UniRule"/>
</dbReference>
<dbReference type="GO" id="GO:0000287">
    <property type="term" value="F:magnesium ion binding"/>
    <property type="evidence" value="ECO:0007669"/>
    <property type="project" value="UniProtKB-UniRule"/>
</dbReference>
<dbReference type="GO" id="GO:0044208">
    <property type="term" value="P:'de novo' AMP biosynthetic process"/>
    <property type="evidence" value="ECO:0007669"/>
    <property type="project" value="UniProtKB-UniRule"/>
</dbReference>
<dbReference type="GO" id="GO:0071276">
    <property type="term" value="P:cellular response to cadmium ion"/>
    <property type="evidence" value="ECO:0007669"/>
    <property type="project" value="EnsemblFungi"/>
</dbReference>
<dbReference type="GO" id="GO:0046040">
    <property type="term" value="P:IMP metabolic process"/>
    <property type="evidence" value="ECO:0007669"/>
    <property type="project" value="TreeGrafter"/>
</dbReference>
<dbReference type="CDD" id="cd03108">
    <property type="entry name" value="AdSS"/>
    <property type="match status" value="1"/>
</dbReference>
<dbReference type="FunFam" id="1.10.300.10:FF:000001">
    <property type="entry name" value="Adenylosuccinate synthetase"/>
    <property type="match status" value="1"/>
</dbReference>
<dbReference type="FunFam" id="3.90.170.10:FF:000001">
    <property type="entry name" value="Adenylosuccinate synthetase"/>
    <property type="match status" value="1"/>
</dbReference>
<dbReference type="Gene3D" id="3.40.440.10">
    <property type="entry name" value="Adenylosuccinate Synthetase, subunit A, domain 1"/>
    <property type="match status" value="1"/>
</dbReference>
<dbReference type="Gene3D" id="1.10.300.10">
    <property type="entry name" value="Adenylosuccinate Synthetase, subunit A, domain 2"/>
    <property type="match status" value="1"/>
</dbReference>
<dbReference type="Gene3D" id="3.90.170.10">
    <property type="entry name" value="Adenylosuccinate Synthetase, subunit A, domain 3"/>
    <property type="match status" value="1"/>
</dbReference>
<dbReference type="HAMAP" id="MF_00011">
    <property type="entry name" value="Adenylosucc_synth"/>
    <property type="match status" value="1"/>
</dbReference>
<dbReference type="InterPro" id="IPR018220">
    <property type="entry name" value="Adenylosuccin_syn_GTP-bd"/>
</dbReference>
<dbReference type="InterPro" id="IPR033128">
    <property type="entry name" value="Adenylosuccin_syn_Lys_AS"/>
</dbReference>
<dbReference type="InterPro" id="IPR042109">
    <property type="entry name" value="Adenylosuccinate_synth_dom1"/>
</dbReference>
<dbReference type="InterPro" id="IPR042110">
    <property type="entry name" value="Adenylosuccinate_synth_dom2"/>
</dbReference>
<dbReference type="InterPro" id="IPR042111">
    <property type="entry name" value="Adenylosuccinate_synth_dom3"/>
</dbReference>
<dbReference type="InterPro" id="IPR001114">
    <property type="entry name" value="Adenylosuccinate_synthetase"/>
</dbReference>
<dbReference type="InterPro" id="IPR027417">
    <property type="entry name" value="P-loop_NTPase"/>
</dbReference>
<dbReference type="NCBIfam" id="NF002223">
    <property type="entry name" value="PRK01117.1"/>
    <property type="match status" value="1"/>
</dbReference>
<dbReference type="NCBIfam" id="TIGR00184">
    <property type="entry name" value="purA"/>
    <property type="match status" value="1"/>
</dbReference>
<dbReference type="PANTHER" id="PTHR11846">
    <property type="entry name" value="ADENYLOSUCCINATE SYNTHETASE"/>
    <property type="match status" value="1"/>
</dbReference>
<dbReference type="PANTHER" id="PTHR11846:SF0">
    <property type="entry name" value="ADENYLOSUCCINATE SYNTHETASE"/>
    <property type="match status" value="1"/>
</dbReference>
<dbReference type="Pfam" id="PF00709">
    <property type="entry name" value="Adenylsucc_synt"/>
    <property type="match status" value="1"/>
</dbReference>
<dbReference type="SMART" id="SM00788">
    <property type="entry name" value="Adenylsucc_synt"/>
    <property type="match status" value="1"/>
</dbReference>
<dbReference type="SUPFAM" id="SSF52540">
    <property type="entry name" value="P-loop containing nucleoside triphosphate hydrolases"/>
    <property type="match status" value="1"/>
</dbReference>
<dbReference type="PROSITE" id="PS01266">
    <property type="entry name" value="ADENYLOSUCCIN_SYN_1"/>
    <property type="match status" value="1"/>
</dbReference>
<dbReference type="PROSITE" id="PS00513">
    <property type="entry name" value="ADENYLOSUCCIN_SYN_2"/>
    <property type="match status" value="1"/>
</dbReference>
<gene>
    <name type="ORF">NFIA_009950</name>
</gene>
<evidence type="ECO:0000250" key="1"/>
<evidence type="ECO:0000255" key="2">
    <source>
        <dbReference type="HAMAP-Rule" id="MF_03125"/>
    </source>
</evidence>
<organism>
    <name type="scientific">Neosartorya fischeri (strain ATCC 1020 / DSM 3700 / CBS 544.65 / FGSC A1164 / JCM 1740 / NRRL 181 / WB 181)</name>
    <name type="common">Aspergillus fischerianus</name>
    <dbReference type="NCBI Taxonomy" id="331117"/>
    <lineage>
        <taxon>Eukaryota</taxon>
        <taxon>Fungi</taxon>
        <taxon>Dikarya</taxon>
        <taxon>Ascomycota</taxon>
        <taxon>Pezizomycotina</taxon>
        <taxon>Eurotiomycetes</taxon>
        <taxon>Eurotiomycetidae</taxon>
        <taxon>Eurotiales</taxon>
        <taxon>Aspergillaceae</taxon>
        <taxon>Aspergillus</taxon>
        <taxon>Aspergillus subgen. Fumigati</taxon>
    </lineage>
</organism>
<comment type="function">
    <text evidence="1">Plays an important role in the de novo pathway and in the salvage pathway of purine nucleotide biosynthesis. Catalyzes the first committed step in the biosynthesis of AMP from IMP (By similarity).</text>
</comment>
<comment type="catalytic activity">
    <reaction evidence="2">
        <text>IMP + L-aspartate + GTP = N(6)-(1,2-dicarboxyethyl)-AMP + GDP + phosphate + 2 H(+)</text>
        <dbReference type="Rhea" id="RHEA:15753"/>
        <dbReference type="ChEBI" id="CHEBI:15378"/>
        <dbReference type="ChEBI" id="CHEBI:29991"/>
        <dbReference type="ChEBI" id="CHEBI:37565"/>
        <dbReference type="ChEBI" id="CHEBI:43474"/>
        <dbReference type="ChEBI" id="CHEBI:57567"/>
        <dbReference type="ChEBI" id="CHEBI:58053"/>
        <dbReference type="ChEBI" id="CHEBI:58189"/>
        <dbReference type="EC" id="6.3.4.4"/>
    </reaction>
</comment>
<comment type="cofactor">
    <cofactor evidence="2">
        <name>Mg(2+)</name>
        <dbReference type="ChEBI" id="CHEBI:18420"/>
    </cofactor>
    <text evidence="2">Binds 1 Mg(2+) ion per subunit.</text>
</comment>
<comment type="pathway">
    <text evidence="2">Purine metabolism; AMP biosynthesis via de novo pathway; AMP from IMP: step 1/2.</text>
</comment>
<comment type="subunit">
    <text evidence="2">Homodimer.</text>
</comment>
<comment type="subcellular location">
    <subcellularLocation>
        <location evidence="2">Cytoplasm</location>
    </subcellularLocation>
</comment>
<comment type="similarity">
    <text evidence="2">Belongs to the adenylosuccinate synthetase family.</text>
</comment>
<proteinExistence type="inferred from homology"/>
<accession>A1D1M2</accession>
<sequence>MGITIVLGSQWGDEGKGKITDMLSQQATLCCRAAGGHNAGHTIVHENITYDFHILPSGLVSPSCVNLIGAGTVVHVPSFFKELASLEEKGLKDAGKRIFISDRAHVCFDLHSVVDGLEEAKLGGRKVGTTGKGIGPCYSDKAARRGVRIGEIMDEAVFERKLRSLHAGYTARFGELEYDVEEEIGRFKDYRKRLVPYVVDQLAFFKQYKDSPNTLVEGANALMLDLDHGTYPYVTSSSTGLGGAVQALSLNPTSITSVIGVVKAYTTRVGSGPFPSEQLNEYGDKLQSVGREFGVTTGRRRRCGWFDLVLCRYSQAINHYTALNLTKLDILDDFDEIKVAVAYVLPDGTRLTDTYPADADLLEKVKVEYVSLPGWKSNTMGVRKYEDLPANARAYIEYIERELGGVPVKWIGTGPARDHMICRE</sequence>
<feature type="chain" id="PRO_0000399346" description="Adenylosuccinate synthetase">
    <location>
        <begin position="1"/>
        <end position="424"/>
    </location>
</feature>
<feature type="active site" description="Proton acceptor" evidence="2">
    <location>
        <position position="13"/>
    </location>
</feature>
<feature type="active site" description="Proton donor" evidence="2">
    <location>
        <position position="41"/>
    </location>
</feature>
<feature type="binding site" evidence="2">
    <location>
        <begin position="12"/>
        <end position="18"/>
    </location>
    <ligand>
        <name>GTP</name>
        <dbReference type="ChEBI" id="CHEBI:37565"/>
    </ligand>
</feature>
<feature type="binding site" description="in other chain" evidence="2">
    <location>
        <begin position="13"/>
        <end position="16"/>
    </location>
    <ligand>
        <name>IMP</name>
        <dbReference type="ChEBI" id="CHEBI:58053"/>
        <note>ligand shared between dimeric partners</note>
    </ligand>
</feature>
<feature type="binding site" evidence="2">
    <location>
        <position position="13"/>
    </location>
    <ligand>
        <name>Mg(2+)</name>
        <dbReference type="ChEBI" id="CHEBI:18420"/>
    </ligand>
</feature>
<feature type="binding site" description="in other chain" evidence="2">
    <location>
        <begin position="38"/>
        <end position="41"/>
    </location>
    <ligand>
        <name>IMP</name>
        <dbReference type="ChEBI" id="CHEBI:58053"/>
        <note>ligand shared between dimeric partners</note>
    </ligand>
</feature>
<feature type="binding site" evidence="2">
    <location>
        <begin position="40"/>
        <end position="42"/>
    </location>
    <ligand>
        <name>GTP</name>
        <dbReference type="ChEBI" id="CHEBI:37565"/>
    </ligand>
</feature>
<feature type="binding site" evidence="2">
    <location>
        <position position="40"/>
    </location>
    <ligand>
        <name>Mg(2+)</name>
        <dbReference type="ChEBI" id="CHEBI:18420"/>
    </ligand>
</feature>
<feature type="binding site" description="in other chain" evidence="2">
    <location>
        <position position="130"/>
    </location>
    <ligand>
        <name>IMP</name>
        <dbReference type="ChEBI" id="CHEBI:58053"/>
        <note>ligand shared between dimeric partners</note>
    </ligand>
</feature>
<feature type="binding site" evidence="2">
    <location>
        <position position="144"/>
    </location>
    <ligand>
        <name>IMP</name>
        <dbReference type="ChEBI" id="CHEBI:58053"/>
        <note>ligand shared between dimeric partners</note>
    </ligand>
</feature>
<feature type="binding site" description="in other chain" evidence="2">
    <location>
        <position position="220"/>
    </location>
    <ligand>
        <name>IMP</name>
        <dbReference type="ChEBI" id="CHEBI:58053"/>
        <note>ligand shared between dimeric partners</note>
    </ligand>
</feature>
<feature type="binding site" description="in other chain" evidence="2">
    <location>
        <position position="235"/>
    </location>
    <ligand>
        <name>IMP</name>
        <dbReference type="ChEBI" id="CHEBI:58053"/>
        <note>ligand shared between dimeric partners</note>
    </ligand>
</feature>
<feature type="binding site" evidence="2">
    <location>
        <begin position="295"/>
        <end position="301"/>
    </location>
    <ligand>
        <name>substrate</name>
    </ligand>
</feature>
<feature type="binding site" description="in other chain" evidence="2">
    <location>
        <position position="299"/>
    </location>
    <ligand>
        <name>IMP</name>
        <dbReference type="ChEBI" id="CHEBI:58053"/>
        <note>ligand shared between dimeric partners</note>
    </ligand>
</feature>
<feature type="binding site" evidence="2">
    <location>
        <position position="301"/>
    </location>
    <ligand>
        <name>GTP</name>
        <dbReference type="ChEBI" id="CHEBI:37565"/>
    </ligand>
</feature>
<feature type="binding site" evidence="2">
    <location>
        <begin position="327"/>
        <end position="329"/>
    </location>
    <ligand>
        <name>GTP</name>
        <dbReference type="ChEBI" id="CHEBI:37565"/>
    </ligand>
</feature>
<feature type="binding site" evidence="2">
    <location>
        <begin position="412"/>
        <end position="414"/>
    </location>
    <ligand>
        <name>GTP</name>
        <dbReference type="ChEBI" id="CHEBI:37565"/>
    </ligand>
</feature>